<organism>
    <name type="scientific">Gluconacetobacter diazotrophicus (strain ATCC 49037 / DSM 5601 / CCUG 37298 / CIP 103539 / LMG 7603 / PAl5)</name>
    <dbReference type="NCBI Taxonomy" id="272568"/>
    <lineage>
        <taxon>Bacteria</taxon>
        <taxon>Pseudomonadati</taxon>
        <taxon>Pseudomonadota</taxon>
        <taxon>Alphaproteobacteria</taxon>
        <taxon>Acetobacterales</taxon>
        <taxon>Acetobacteraceae</taxon>
        <taxon>Gluconacetobacter</taxon>
    </lineage>
</organism>
<gene>
    <name evidence="1" type="primary">nuoK</name>
    <name type="ordered locus">GDI2462</name>
    <name type="ordered locus">Gdia_0709</name>
</gene>
<protein>
    <recommendedName>
        <fullName evidence="1">NADH-quinone oxidoreductase subunit K</fullName>
        <ecNumber evidence="1">7.1.1.-</ecNumber>
    </recommendedName>
    <alternativeName>
        <fullName evidence="1">NADH dehydrogenase I subunit K</fullName>
    </alternativeName>
    <alternativeName>
        <fullName evidence="1">NDH-1 subunit K</fullName>
    </alternativeName>
</protein>
<proteinExistence type="inferred from homology"/>
<comment type="function">
    <text evidence="1">NDH-1 shuttles electrons from NADH, via FMN and iron-sulfur (Fe-S) centers, to quinones in the respiratory chain. The immediate electron acceptor for the enzyme in this species is believed to be ubiquinone. Couples the redox reaction to proton translocation (for every two electrons transferred, four hydrogen ions are translocated across the cytoplasmic membrane), and thus conserves the redox energy in a proton gradient.</text>
</comment>
<comment type="catalytic activity">
    <reaction evidence="1">
        <text>a quinone + NADH + 5 H(+)(in) = a quinol + NAD(+) + 4 H(+)(out)</text>
        <dbReference type="Rhea" id="RHEA:57888"/>
        <dbReference type="ChEBI" id="CHEBI:15378"/>
        <dbReference type="ChEBI" id="CHEBI:24646"/>
        <dbReference type="ChEBI" id="CHEBI:57540"/>
        <dbReference type="ChEBI" id="CHEBI:57945"/>
        <dbReference type="ChEBI" id="CHEBI:132124"/>
    </reaction>
</comment>
<comment type="subunit">
    <text evidence="1">NDH-1 is composed of 14 different subunits. Subunits NuoA, H, J, K, L, M, N constitute the membrane sector of the complex.</text>
</comment>
<comment type="subcellular location">
    <subcellularLocation>
        <location evidence="1">Cell inner membrane</location>
        <topology evidence="1">Multi-pass membrane protein</topology>
    </subcellularLocation>
</comment>
<comment type="similarity">
    <text evidence="1">Belongs to the complex I subunit 4L family.</text>
</comment>
<dbReference type="EC" id="7.1.1.-" evidence="1"/>
<dbReference type="EMBL" id="CP001189">
    <property type="protein sequence ID" value="ACI50499.1"/>
    <property type="molecule type" value="Genomic_DNA"/>
</dbReference>
<dbReference type="EMBL" id="AM889285">
    <property type="protein sequence ID" value="CAP56405.1"/>
    <property type="molecule type" value="Genomic_DNA"/>
</dbReference>
<dbReference type="RefSeq" id="WP_012226469.1">
    <property type="nucleotide sequence ID" value="NC_010125.1"/>
</dbReference>
<dbReference type="SMR" id="A9HN78"/>
<dbReference type="STRING" id="272568.GDI2462"/>
<dbReference type="KEGG" id="gdi:GDI2462"/>
<dbReference type="KEGG" id="gdj:Gdia_0709"/>
<dbReference type="eggNOG" id="COG0713">
    <property type="taxonomic scope" value="Bacteria"/>
</dbReference>
<dbReference type="HOGENOM" id="CLU_144724_0_1_5"/>
<dbReference type="Proteomes" id="UP000001176">
    <property type="component" value="Chromosome"/>
</dbReference>
<dbReference type="GO" id="GO:0030964">
    <property type="term" value="C:NADH dehydrogenase complex"/>
    <property type="evidence" value="ECO:0007669"/>
    <property type="project" value="TreeGrafter"/>
</dbReference>
<dbReference type="GO" id="GO:0005886">
    <property type="term" value="C:plasma membrane"/>
    <property type="evidence" value="ECO:0007669"/>
    <property type="project" value="UniProtKB-SubCell"/>
</dbReference>
<dbReference type="GO" id="GO:0050136">
    <property type="term" value="F:NADH:ubiquinone reductase (non-electrogenic) activity"/>
    <property type="evidence" value="ECO:0007669"/>
    <property type="project" value="UniProtKB-UniRule"/>
</dbReference>
<dbReference type="GO" id="GO:0048038">
    <property type="term" value="F:quinone binding"/>
    <property type="evidence" value="ECO:0007669"/>
    <property type="project" value="UniProtKB-KW"/>
</dbReference>
<dbReference type="GO" id="GO:0042773">
    <property type="term" value="P:ATP synthesis coupled electron transport"/>
    <property type="evidence" value="ECO:0007669"/>
    <property type="project" value="InterPro"/>
</dbReference>
<dbReference type="FunFam" id="1.10.287.3510:FF:000001">
    <property type="entry name" value="NADH-quinone oxidoreductase subunit K"/>
    <property type="match status" value="1"/>
</dbReference>
<dbReference type="Gene3D" id="1.10.287.3510">
    <property type="match status" value="1"/>
</dbReference>
<dbReference type="HAMAP" id="MF_01456">
    <property type="entry name" value="NDH1_NuoK"/>
    <property type="match status" value="1"/>
</dbReference>
<dbReference type="InterPro" id="IPR001133">
    <property type="entry name" value="NADH_UbQ_OxRdtase_chain4L/K"/>
</dbReference>
<dbReference type="InterPro" id="IPR039428">
    <property type="entry name" value="NUOK/Mnh_C1-like"/>
</dbReference>
<dbReference type="NCBIfam" id="NF004319">
    <property type="entry name" value="PRK05715.1-1"/>
    <property type="match status" value="1"/>
</dbReference>
<dbReference type="NCBIfam" id="NF004320">
    <property type="entry name" value="PRK05715.1-2"/>
    <property type="match status" value="1"/>
</dbReference>
<dbReference type="PANTHER" id="PTHR11434:SF16">
    <property type="entry name" value="NADH-UBIQUINONE OXIDOREDUCTASE CHAIN 4L"/>
    <property type="match status" value="1"/>
</dbReference>
<dbReference type="PANTHER" id="PTHR11434">
    <property type="entry name" value="NADH-UBIQUINONE OXIDOREDUCTASE SUBUNIT ND4L"/>
    <property type="match status" value="1"/>
</dbReference>
<dbReference type="Pfam" id="PF00420">
    <property type="entry name" value="Oxidored_q2"/>
    <property type="match status" value="1"/>
</dbReference>
<keyword id="KW-0997">Cell inner membrane</keyword>
<keyword id="KW-1003">Cell membrane</keyword>
<keyword id="KW-0472">Membrane</keyword>
<keyword id="KW-0520">NAD</keyword>
<keyword id="KW-0874">Quinone</keyword>
<keyword id="KW-1185">Reference proteome</keyword>
<keyword id="KW-1278">Translocase</keyword>
<keyword id="KW-0812">Transmembrane</keyword>
<keyword id="KW-1133">Transmembrane helix</keyword>
<keyword id="KW-0813">Transport</keyword>
<keyword id="KW-0830">Ubiquinone</keyword>
<reference key="1">
    <citation type="journal article" date="2009" name="BMC Genomics">
        <title>Complete genome sequence of the sugarcane nitrogen-fixing endophyte Gluconacetobacter diazotrophicus Pal5.</title>
        <authorList>
            <person name="Bertalan M."/>
            <person name="Albano R."/>
            <person name="de Padua V."/>
            <person name="Rouws L."/>
            <person name="Rojas C."/>
            <person name="Hemerly A."/>
            <person name="Teixeira K."/>
            <person name="Schwab S."/>
            <person name="Araujo J."/>
            <person name="Oliveira A."/>
            <person name="Franca L."/>
            <person name="Magalhaes V."/>
            <person name="Alqueres S."/>
            <person name="Cardoso A."/>
            <person name="Almeida W."/>
            <person name="Loureiro M.M."/>
            <person name="Nogueira E."/>
            <person name="Cidade D."/>
            <person name="Oliveira D."/>
            <person name="Simao T."/>
            <person name="Macedo J."/>
            <person name="Valadao A."/>
            <person name="Dreschsel M."/>
            <person name="Freitas F."/>
            <person name="Vidal M."/>
            <person name="Guedes H."/>
            <person name="Rodrigues E."/>
            <person name="Meneses C."/>
            <person name="Brioso P."/>
            <person name="Pozzer L."/>
            <person name="Figueiredo D."/>
            <person name="Montano H."/>
            <person name="Junior J."/>
            <person name="de Souza Filho G."/>
            <person name="Martin Quintana Flores V."/>
            <person name="Ferreira B."/>
            <person name="Branco A."/>
            <person name="Gonzalez P."/>
            <person name="Guillobel H."/>
            <person name="Lemos M."/>
            <person name="Seibel L."/>
            <person name="Macedo J."/>
            <person name="Alves-Ferreira M."/>
            <person name="Sachetto-Martins G."/>
            <person name="Coelho A."/>
            <person name="Santos E."/>
            <person name="Amaral G."/>
            <person name="Neves A."/>
            <person name="Pacheco A.B."/>
            <person name="Carvalho D."/>
            <person name="Lery L."/>
            <person name="Bisch P."/>
            <person name="Rossle S.C."/>
            <person name="Urmenyi T."/>
            <person name="Rael Pereira A."/>
            <person name="Silva R."/>
            <person name="Rondinelli E."/>
            <person name="von Kruger W."/>
            <person name="Martins O."/>
            <person name="Baldani J.I."/>
            <person name="Ferreira P.C."/>
        </authorList>
    </citation>
    <scope>NUCLEOTIDE SEQUENCE [LARGE SCALE GENOMIC DNA]</scope>
    <source>
        <strain>ATCC 49037 / DSM 5601 / CCUG 37298 / CIP 103539 / LMG 7603 / PAl5</strain>
    </source>
</reference>
<reference key="2">
    <citation type="journal article" date="2010" name="Stand. Genomic Sci.">
        <title>Two genome sequences of the same bacterial strain, Gluconacetobacter diazotrophicus PAl 5, suggest a new standard in genome sequence submission.</title>
        <authorList>
            <person name="Giongo A."/>
            <person name="Tyler H.L."/>
            <person name="Zipperer U.N."/>
            <person name="Triplett E.W."/>
        </authorList>
    </citation>
    <scope>NUCLEOTIDE SEQUENCE [LARGE SCALE GENOMIC DNA]</scope>
    <source>
        <strain>ATCC 49037 / DSM 5601 / CCUG 37298 / CIP 103539 / LMG 7603 / PAl5</strain>
    </source>
</reference>
<accession>A9HN78</accession>
<feature type="chain" id="PRO_0000390086" description="NADH-quinone oxidoreductase subunit K">
    <location>
        <begin position="1"/>
        <end position="104"/>
    </location>
</feature>
<feature type="transmembrane region" description="Helical" evidence="1">
    <location>
        <begin position="7"/>
        <end position="27"/>
    </location>
</feature>
<feature type="transmembrane region" description="Helical" evidence="1">
    <location>
        <begin position="31"/>
        <end position="51"/>
    </location>
</feature>
<feature type="transmembrane region" description="Helical" evidence="1">
    <location>
        <begin position="63"/>
        <end position="83"/>
    </location>
</feature>
<sequence>MIMRPTPDMAMLLAAGLFALGLLGVLVRRNLLFMLMSIEIMLNAAALAFVAAGTRWHAAEGQVMFLMILSLAAAEAAIGLAILLRMHQAGRPTLDADTGNRLKG</sequence>
<evidence type="ECO:0000255" key="1">
    <source>
        <dbReference type="HAMAP-Rule" id="MF_01456"/>
    </source>
</evidence>
<name>NUOK_GLUDA</name>